<reference key="1">
    <citation type="journal article" date="2001" name="Nature">
        <title>Complete genome sequence of a multiple drug resistant Salmonella enterica serovar Typhi CT18.</title>
        <authorList>
            <person name="Parkhill J."/>
            <person name="Dougan G."/>
            <person name="James K.D."/>
            <person name="Thomson N.R."/>
            <person name="Pickard D."/>
            <person name="Wain J."/>
            <person name="Churcher C.M."/>
            <person name="Mungall K.L."/>
            <person name="Bentley S.D."/>
            <person name="Holden M.T.G."/>
            <person name="Sebaihia M."/>
            <person name="Baker S."/>
            <person name="Basham D."/>
            <person name="Brooks K."/>
            <person name="Chillingworth T."/>
            <person name="Connerton P."/>
            <person name="Cronin A."/>
            <person name="Davis P."/>
            <person name="Davies R.M."/>
            <person name="Dowd L."/>
            <person name="White N."/>
            <person name="Farrar J."/>
            <person name="Feltwell T."/>
            <person name="Hamlin N."/>
            <person name="Haque A."/>
            <person name="Hien T.T."/>
            <person name="Holroyd S."/>
            <person name="Jagels K."/>
            <person name="Krogh A."/>
            <person name="Larsen T.S."/>
            <person name="Leather S."/>
            <person name="Moule S."/>
            <person name="O'Gaora P."/>
            <person name="Parry C."/>
            <person name="Quail M.A."/>
            <person name="Rutherford K.M."/>
            <person name="Simmonds M."/>
            <person name="Skelton J."/>
            <person name="Stevens K."/>
            <person name="Whitehead S."/>
            <person name="Barrell B.G."/>
        </authorList>
    </citation>
    <scope>NUCLEOTIDE SEQUENCE [LARGE SCALE GENOMIC DNA]</scope>
    <source>
        <strain>CT18</strain>
    </source>
</reference>
<reference key="2">
    <citation type="journal article" date="2003" name="J. Bacteriol.">
        <title>Comparative genomics of Salmonella enterica serovar Typhi strains Ty2 and CT18.</title>
        <authorList>
            <person name="Deng W."/>
            <person name="Liou S.-R."/>
            <person name="Plunkett G. III"/>
            <person name="Mayhew G.F."/>
            <person name="Rose D.J."/>
            <person name="Burland V."/>
            <person name="Kodoyianni V."/>
            <person name="Schwartz D.C."/>
            <person name="Blattner F.R."/>
        </authorList>
    </citation>
    <scope>NUCLEOTIDE SEQUENCE [LARGE SCALE GENOMIC DNA]</scope>
    <source>
        <strain>ATCC 700931 / Ty2</strain>
    </source>
</reference>
<sequence length="190" mass="20354">MNNNLPTGSSAAVVDLLNKENVIAYPTEAVFGVGCDPDSETAVTRLLALKQRPVDKGLILIAASFEQLKPYIDDSILTAAQRKAVFDCWPGPVTFVFPAPATTPRWLTGRFDSLAVRVTNHPLVVALCNAYGKPLVSTSANLSGLPPCRTVEEVRAQFGDDFPVVEGATGGRLNPSEIRDALTGELFRQG</sequence>
<comment type="function">
    <text evidence="1">Required for the formation of a threonylcarbamoyl group on adenosine at position 37 (t(6)A37) in tRNAs that read codons beginning with adenine. Catalyzes the conversion of L-threonine, HCO(3)(-)/CO(2) and ATP to give threonylcarbamoyl-AMP (TC-AMP) as the acyladenylate intermediate, with the release of diphosphate.</text>
</comment>
<comment type="catalytic activity">
    <reaction evidence="1">
        <text>L-threonine + hydrogencarbonate + ATP = L-threonylcarbamoyladenylate + diphosphate + H2O</text>
        <dbReference type="Rhea" id="RHEA:36407"/>
        <dbReference type="ChEBI" id="CHEBI:15377"/>
        <dbReference type="ChEBI" id="CHEBI:17544"/>
        <dbReference type="ChEBI" id="CHEBI:30616"/>
        <dbReference type="ChEBI" id="CHEBI:33019"/>
        <dbReference type="ChEBI" id="CHEBI:57926"/>
        <dbReference type="ChEBI" id="CHEBI:73682"/>
        <dbReference type="EC" id="2.7.7.87"/>
    </reaction>
</comment>
<comment type="subcellular location">
    <subcellularLocation>
        <location evidence="1">Cytoplasm</location>
    </subcellularLocation>
</comment>
<comment type="similarity">
    <text evidence="1">Belongs to the SUA5 family. TsaC subfamily.</text>
</comment>
<name>TSAC_SALTI</name>
<dbReference type="EC" id="2.7.7.87" evidence="1"/>
<dbReference type="EMBL" id="AE014613">
    <property type="protein sequence ID" value="AAO71569.1"/>
    <property type="molecule type" value="Genomic_DNA"/>
</dbReference>
<dbReference type="EMBL" id="AL513382">
    <property type="protein sequence ID" value="CAD09183.1"/>
    <property type="molecule type" value="Genomic_DNA"/>
</dbReference>
<dbReference type="RefSeq" id="NP_458497.1">
    <property type="nucleotide sequence ID" value="NC_003198.1"/>
</dbReference>
<dbReference type="RefSeq" id="WP_001063622.1">
    <property type="nucleotide sequence ID" value="NZ_WSUR01000046.1"/>
</dbReference>
<dbReference type="SMR" id="Q8Z1W6"/>
<dbReference type="STRING" id="220341.gene:17588223"/>
<dbReference type="KEGG" id="stt:t4102"/>
<dbReference type="KEGG" id="sty:STY4395"/>
<dbReference type="PATRIC" id="fig|220341.7.peg.4491"/>
<dbReference type="eggNOG" id="COG0009">
    <property type="taxonomic scope" value="Bacteria"/>
</dbReference>
<dbReference type="HOGENOM" id="CLU_031397_6_0_6"/>
<dbReference type="OMA" id="LVDAFWP"/>
<dbReference type="OrthoDB" id="9814580at2"/>
<dbReference type="Proteomes" id="UP000000541">
    <property type="component" value="Chromosome"/>
</dbReference>
<dbReference type="Proteomes" id="UP000002670">
    <property type="component" value="Chromosome"/>
</dbReference>
<dbReference type="GO" id="GO:0005737">
    <property type="term" value="C:cytoplasm"/>
    <property type="evidence" value="ECO:0007669"/>
    <property type="project" value="UniProtKB-SubCell"/>
</dbReference>
<dbReference type="GO" id="GO:0005524">
    <property type="term" value="F:ATP binding"/>
    <property type="evidence" value="ECO:0007669"/>
    <property type="project" value="UniProtKB-UniRule"/>
</dbReference>
<dbReference type="GO" id="GO:0003725">
    <property type="term" value="F:double-stranded RNA binding"/>
    <property type="evidence" value="ECO:0007669"/>
    <property type="project" value="InterPro"/>
</dbReference>
<dbReference type="GO" id="GO:0061710">
    <property type="term" value="F:L-threonylcarbamoyladenylate synthase"/>
    <property type="evidence" value="ECO:0007669"/>
    <property type="project" value="UniProtKB-EC"/>
</dbReference>
<dbReference type="GO" id="GO:0000049">
    <property type="term" value="F:tRNA binding"/>
    <property type="evidence" value="ECO:0007669"/>
    <property type="project" value="TreeGrafter"/>
</dbReference>
<dbReference type="GO" id="GO:0006450">
    <property type="term" value="P:regulation of translational fidelity"/>
    <property type="evidence" value="ECO:0007669"/>
    <property type="project" value="TreeGrafter"/>
</dbReference>
<dbReference type="GO" id="GO:0002949">
    <property type="term" value="P:tRNA threonylcarbamoyladenosine modification"/>
    <property type="evidence" value="ECO:0007669"/>
    <property type="project" value="UniProtKB-UniRule"/>
</dbReference>
<dbReference type="FunFam" id="3.90.870.10:FF:000004">
    <property type="entry name" value="Threonylcarbamoyl-AMP synthase"/>
    <property type="match status" value="1"/>
</dbReference>
<dbReference type="Gene3D" id="3.90.870.10">
    <property type="entry name" value="DHBP synthase"/>
    <property type="match status" value="1"/>
</dbReference>
<dbReference type="HAMAP" id="MF_01852">
    <property type="entry name" value="TsaC"/>
    <property type="match status" value="1"/>
</dbReference>
<dbReference type="InterPro" id="IPR017945">
    <property type="entry name" value="DHBP_synth_RibB-like_a/b_dom"/>
</dbReference>
<dbReference type="InterPro" id="IPR006070">
    <property type="entry name" value="Sua5-like_dom"/>
</dbReference>
<dbReference type="InterPro" id="IPR023535">
    <property type="entry name" value="TC-AMP_synthase"/>
</dbReference>
<dbReference type="InterPro" id="IPR050156">
    <property type="entry name" value="TC-AMP_synthase_SUA5"/>
</dbReference>
<dbReference type="NCBIfam" id="NF007919">
    <property type="entry name" value="PRK10634.1"/>
    <property type="match status" value="1"/>
</dbReference>
<dbReference type="PANTHER" id="PTHR17490">
    <property type="entry name" value="SUA5"/>
    <property type="match status" value="1"/>
</dbReference>
<dbReference type="PANTHER" id="PTHR17490:SF18">
    <property type="entry name" value="THREONYLCARBAMOYL-AMP SYNTHASE"/>
    <property type="match status" value="1"/>
</dbReference>
<dbReference type="Pfam" id="PF01300">
    <property type="entry name" value="Sua5_yciO_yrdC"/>
    <property type="match status" value="1"/>
</dbReference>
<dbReference type="SUPFAM" id="SSF55821">
    <property type="entry name" value="YrdC/RibB"/>
    <property type="match status" value="1"/>
</dbReference>
<dbReference type="PROSITE" id="PS51163">
    <property type="entry name" value="YRDC"/>
    <property type="match status" value="1"/>
</dbReference>
<proteinExistence type="inferred from homology"/>
<accession>Q8Z1W6</accession>
<accession>Q7C593</accession>
<organism>
    <name type="scientific">Salmonella typhi</name>
    <dbReference type="NCBI Taxonomy" id="90370"/>
    <lineage>
        <taxon>Bacteria</taxon>
        <taxon>Pseudomonadati</taxon>
        <taxon>Pseudomonadota</taxon>
        <taxon>Gammaproteobacteria</taxon>
        <taxon>Enterobacterales</taxon>
        <taxon>Enterobacteriaceae</taxon>
        <taxon>Salmonella</taxon>
    </lineage>
</organism>
<protein>
    <recommendedName>
        <fullName evidence="1">Threonylcarbamoyl-AMP synthase</fullName>
        <shortName evidence="1">TC-AMP synthase</shortName>
        <ecNumber evidence="1">2.7.7.87</ecNumber>
    </recommendedName>
    <alternativeName>
        <fullName evidence="1">L-threonylcarbamoyladenylate synthase</fullName>
    </alternativeName>
    <alternativeName>
        <fullName evidence="1">t(6)A37 threonylcarbamoyladenosine biosynthesis protein TsaC</fullName>
    </alternativeName>
    <alternativeName>
        <fullName evidence="1">tRNA threonylcarbamoyladenosine biosynthesis protein TsaC</fullName>
    </alternativeName>
</protein>
<keyword id="KW-0067">ATP-binding</keyword>
<keyword id="KW-0963">Cytoplasm</keyword>
<keyword id="KW-0547">Nucleotide-binding</keyword>
<keyword id="KW-0548">Nucleotidyltransferase</keyword>
<keyword id="KW-0808">Transferase</keyword>
<keyword id="KW-0819">tRNA processing</keyword>
<feature type="chain" id="PRO_0000352971" description="Threonylcarbamoyl-AMP synthase">
    <location>
        <begin position="1"/>
        <end position="190"/>
    </location>
</feature>
<feature type="domain" description="YrdC-like" evidence="1">
    <location>
        <begin position="7"/>
        <end position="190"/>
    </location>
</feature>
<gene>
    <name evidence="1" type="primary">tsaC</name>
    <name type="synonym">rimN</name>
    <name type="ordered locus">STY4395</name>
    <name type="ordered locus">t4102</name>
</gene>
<evidence type="ECO:0000255" key="1">
    <source>
        <dbReference type="HAMAP-Rule" id="MF_01852"/>
    </source>
</evidence>